<gene>
    <name type="primary">amyA</name>
    <name type="ordered locus">PF0272</name>
</gene>
<accession>P49067</accession>
<name>AMYA_PYRFU</name>
<feature type="initiator methionine" description="Removed">
    <location>
        <position position="1"/>
    </location>
</feature>
<feature type="chain" id="PRO_0000184573" description="Alpha-amylase">
    <location>
        <begin position="2"/>
        <end position="649"/>
    </location>
</feature>
<feature type="active site" description="Nucleophile" evidence="1">
    <location>
        <position position="124"/>
    </location>
</feature>
<feature type="active site" description="Proton donor" evidence="1">
    <location>
        <position position="215"/>
    </location>
</feature>
<reference key="1">
    <citation type="journal article" date="1993" name="J. Biol. Chem.">
        <title>Alpha-amylase from the hyperthermophilic archaebacterium Pyrococcus furiosus. Cloning and sequencing of the gene and expression in Escherichia coli.</title>
        <authorList>
            <person name="Laderman K.A."/>
            <person name="Asada K."/>
            <person name="Uemori T."/>
            <person name="Mukai H."/>
            <person name="Taguchi Y."/>
            <person name="Kato I."/>
            <person name="Anfinsen C.B."/>
        </authorList>
    </citation>
    <scope>NUCLEOTIDE SEQUENCE [GENOMIC DNA]</scope>
    <scope>PARTIAL PROTEIN SEQUENCE</scope>
    <source>
        <strain>ATCC 43587 / DSM 3638 / JCM 8422 / Vc1</strain>
    </source>
</reference>
<reference key="2">
    <citation type="journal article" date="1999" name="Genetics">
        <title>Divergence of the hyperthermophilic archaea Pyrococcus furiosus and P. horikoshii inferred from complete genomic sequences.</title>
        <authorList>
            <person name="Maeder D.L."/>
            <person name="Weiss R.B."/>
            <person name="Dunn D.M."/>
            <person name="Cherry J.L."/>
            <person name="Gonzalez J.M."/>
            <person name="DiRuggiero J."/>
            <person name="Robb F.T."/>
        </authorList>
    </citation>
    <scope>NUCLEOTIDE SEQUENCE [LARGE SCALE GENOMIC DNA]</scope>
    <source>
        <strain>ATCC 43587 / DSM 3638 / JCM 8422 / Vc1</strain>
    </source>
</reference>
<reference key="3">
    <citation type="journal article" date="1993" name="J. Biol. Chem.">
        <title>The purification and characterization of an extremely thermostable alpha-amylase from the hyperthermophilic archaebacterium Pyrococcus furiosus.</title>
        <authorList>
            <person name="Laderman K.A."/>
            <person name="Davis B.R."/>
            <person name="Krutzsch H.C."/>
            <person name="Lewis M.S."/>
            <person name="Griko Y.V."/>
            <person name="Privalov P.L."/>
            <person name="Anfinsen C.B."/>
        </authorList>
    </citation>
    <scope>CHARACTERIZATION</scope>
    <source>
        <strain>ATCC 43587 / DSM 3638 / JCM 8422 / Vc1</strain>
    </source>
</reference>
<dbReference type="EC" id="3.2.1.1"/>
<dbReference type="EMBL" id="L22346">
    <property type="protein sequence ID" value="AAA72035.1"/>
    <property type="molecule type" value="Unassigned_DNA"/>
</dbReference>
<dbReference type="EMBL" id="AE009950">
    <property type="protein sequence ID" value="AAL80396.1"/>
    <property type="status" value="ALT_INIT"/>
    <property type="molecule type" value="Genomic_DNA"/>
</dbReference>
<dbReference type="PIR" id="A49512">
    <property type="entry name" value="A49512"/>
</dbReference>
<dbReference type="SMR" id="P49067"/>
<dbReference type="STRING" id="186497.PF0272"/>
<dbReference type="CAZy" id="GH57">
    <property type="family name" value="Glycoside Hydrolase Family 57"/>
</dbReference>
<dbReference type="PaxDb" id="186497-PF0272"/>
<dbReference type="KEGG" id="pfu:PF0272"/>
<dbReference type="PATRIC" id="fig|186497.12.peg.284"/>
<dbReference type="eggNOG" id="arCOG03280">
    <property type="taxonomic scope" value="Archaea"/>
</dbReference>
<dbReference type="HOGENOM" id="CLU_026700_0_0_2"/>
<dbReference type="OrthoDB" id="18576at2157"/>
<dbReference type="PhylomeDB" id="P49067"/>
<dbReference type="BioCyc" id="MetaCyc:MONOMER-16304"/>
<dbReference type="Proteomes" id="UP000001013">
    <property type="component" value="Chromosome"/>
</dbReference>
<dbReference type="GO" id="GO:0004556">
    <property type="term" value="F:alpha-amylase activity"/>
    <property type="evidence" value="ECO:0007669"/>
    <property type="project" value="UniProtKB-EC"/>
</dbReference>
<dbReference type="GO" id="GO:0030246">
    <property type="term" value="F:carbohydrate binding"/>
    <property type="evidence" value="ECO:0007669"/>
    <property type="project" value="InterPro"/>
</dbReference>
<dbReference type="GO" id="GO:0005975">
    <property type="term" value="P:carbohydrate metabolic process"/>
    <property type="evidence" value="ECO:0007669"/>
    <property type="project" value="InterPro"/>
</dbReference>
<dbReference type="CDD" id="cd10793">
    <property type="entry name" value="GH57N_TLGT_like"/>
    <property type="match status" value="1"/>
</dbReference>
<dbReference type="Gene3D" id="2.70.98.10">
    <property type="match status" value="1"/>
</dbReference>
<dbReference type="Gene3D" id="3.20.110.20">
    <property type="match status" value="1"/>
</dbReference>
<dbReference type="InterPro" id="IPR015179">
    <property type="entry name" value="A-amylase/a-glucTrfase_C"/>
</dbReference>
<dbReference type="InterPro" id="IPR015178">
    <property type="entry name" value="A-amylase/a-glucTrfase_central"/>
</dbReference>
<dbReference type="InterPro" id="IPR011013">
    <property type="entry name" value="Gal_mutarotase_sf_dom"/>
</dbReference>
<dbReference type="InterPro" id="IPR014718">
    <property type="entry name" value="GH-type_carb-bd"/>
</dbReference>
<dbReference type="InterPro" id="IPR052046">
    <property type="entry name" value="GH57_Enzymes"/>
</dbReference>
<dbReference type="InterPro" id="IPR011330">
    <property type="entry name" value="Glyco_hydro/deAcase_b/a-brl"/>
</dbReference>
<dbReference type="InterPro" id="IPR028995">
    <property type="entry name" value="Glyco_hydro_57/38_cen_sf"/>
</dbReference>
<dbReference type="InterPro" id="IPR004300">
    <property type="entry name" value="Glyco_hydro_57_N"/>
</dbReference>
<dbReference type="PANTHER" id="PTHR36306:SF1">
    <property type="entry name" value="ALPHA-AMYLASE-RELATED"/>
    <property type="match status" value="1"/>
</dbReference>
<dbReference type="PANTHER" id="PTHR36306">
    <property type="entry name" value="ALPHA-AMYLASE-RELATED-RELATED"/>
    <property type="match status" value="1"/>
</dbReference>
<dbReference type="Pfam" id="PF09094">
    <property type="entry name" value="AmyA-A_glucT_m"/>
    <property type="match status" value="1"/>
</dbReference>
<dbReference type="Pfam" id="PF09095">
    <property type="entry name" value="AmyA-gluTrfs_C"/>
    <property type="match status" value="1"/>
</dbReference>
<dbReference type="Pfam" id="PF03065">
    <property type="entry name" value="Glyco_hydro_57"/>
    <property type="match status" value="1"/>
</dbReference>
<dbReference type="SUPFAM" id="SSF88688">
    <property type="entry name" value="Families 57/38 glycoside transferase middle domain"/>
    <property type="match status" value="1"/>
</dbReference>
<dbReference type="SUPFAM" id="SSF74650">
    <property type="entry name" value="Galactose mutarotase-like"/>
    <property type="match status" value="1"/>
</dbReference>
<dbReference type="SUPFAM" id="SSF88713">
    <property type="entry name" value="Glycoside hydrolase/deacetylase"/>
    <property type="match status" value="1"/>
</dbReference>
<evidence type="ECO:0000250" key="1"/>
<evidence type="ECO:0000305" key="2"/>
<sequence>MGDKINFIFGIHNHQPLGNFGWVFEEAYEKCYWPFLETLEEYPNMKVAIHTSGPLIEWLQDNRPEYIDLLRSLVKRGQVEIVVAGFYEPVLASIPKEDRIEQIRLMKEWAKSIGFDARGVWLTERVWQPELVKTLKESGIDYVIVDDYHFMSAGLSKEELYWPYYTEDGGEVIAVFPIDEKLRYLIPFRPVDKVLEYLHSLIDGDESKVAVFHDDGEKFGIWPGTYEWVYEKGWLREFFDRISSDEKINLMLYTEYLEKYKPRGLVYLPIASYFEMSEWSLPAKQARLFVEFVNELKVKGIFEKYRVFVRGGIWKNFFYKYPESNYMHKRMLMVSKLVRNNPEARKYLLRAQCNDAYWHGLFGGVYLPHLRRAIWNNLIKANSYVSLGKVIRDIDYDGFEEVLIENDNFYAVFKPSYGGSLVEFSSKNRLVNYVDVLARRWEHYHGYVESQFDGVASIHELEKKIPDEIRKEVAYDKYRRFMLQDHVVPLGTTLEDFMFSRQQEIGEFPRVPYSYELLDGGIRLKREHLGIEVEKTVKLVNDGFEVEYIVNNKTGNPVLFAVELNVAVQSIMESPGVLRGKEIVVDDKYAVGKFALKFEDEMEVWKYPVKTLSQSESGWDLIQQGVSYIVPIRLEDKIRFKLKFEEASG</sequence>
<organism>
    <name type="scientific">Pyrococcus furiosus (strain ATCC 43587 / DSM 3638 / JCM 8422 / Vc1)</name>
    <dbReference type="NCBI Taxonomy" id="186497"/>
    <lineage>
        <taxon>Archaea</taxon>
        <taxon>Methanobacteriati</taxon>
        <taxon>Methanobacteriota</taxon>
        <taxon>Thermococci</taxon>
        <taxon>Thermococcales</taxon>
        <taxon>Thermococcaceae</taxon>
        <taxon>Pyrococcus</taxon>
    </lineage>
</organism>
<keyword id="KW-0119">Carbohydrate metabolism</keyword>
<keyword id="KW-0903">Direct protein sequencing</keyword>
<keyword id="KW-0326">Glycosidase</keyword>
<keyword id="KW-0378">Hydrolase</keyword>
<keyword id="KW-1185">Reference proteome</keyword>
<proteinExistence type="evidence at protein level"/>
<comment type="function">
    <text>Displays a broad range of substrate specificity, with the capacity to hydrolyze carbohydrates as simple as maltotriose.</text>
</comment>
<comment type="catalytic activity">
    <reaction>
        <text>Endohydrolysis of (1-&gt;4)-alpha-D-glucosidic linkages in polysaccharides containing three or more (1-&gt;4)-alpha-linked D-glucose units.</text>
        <dbReference type="EC" id="3.2.1.1"/>
    </reaction>
</comment>
<comment type="biophysicochemical properties">
    <phDependence>
        <text>Optimum pH is 6.5-7.5.</text>
    </phDependence>
    <temperatureDependence>
        <text>Optimum temperature is 100 degrees Celsius. Inactive below 40 degrees Celsius. Extremely thermostable.</text>
    </temperatureDependence>
</comment>
<comment type="subunit">
    <text>Homodimer.</text>
</comment>
<comment type="similarity">
    <text evidence="2">Belongs to the glycosyl hydrolase 57 family.</text>
</comment>
<comment type="sequence caution" evidence="2">
    <conflict type="erroneous initiation">
        <sequence resource="EMBL-CDS" id="AAL80396"/>
    </conflict>
</comment>
<protein>
    <recommendedName>
        <fullName>Alpha-amylase</fullName>
        <ecNumber>3.2.1.1</ecNumber>
    </recommendedName>
</protein>